<organism>
    <name type="scientific">Actinobacillus pleuropneumoniae serotype 3 (strain JL03)</name>
    <dbReference type="NCBI Taxonomy" id="434271"/>
    <lineage>
        <taxon>Bacteria</taxon>
        <taxon>Pseudomonadati</taxon>
        <taxon>Pseudomonadota</taxon>
        <taxon>Gammaproteobacteria</taxon>
        <taxon>Pasteurellales</taxon>
        <taxon>Pasteurellaceae</taxon>
        <taxon>Actinobacillus</taxon>
    </lineage>
</organism>
<keyword id="KW-0067">ATP-binding</keyword>
<keyword id="KW-0997">Cell inner membrane</keyword>
<keyword id="KW-1003">Cell membrane</keyword>
<keyword id="KW-0963">Cytoplasm</keyword>
<keyword id="KW-0472">Membrane</keyword>
<keyword id="KW-0479">Metal-binding</keyword>
<keyword id="KW-0547">Nucleotide-binding</keyword>
<keyword id="KW-0653">Protein transport</keyword>
<keyword id="KW-1278">Translocase</keyword>
<keyword id="KW-0811">Translocation</keyword>
<keyword id="KW-0813">Transport</keyword>
<keyword id="KW-0862">Zinc</keyword>
<sequence length="905" mass="102496">MISKIITSIFGSSNDRTLKRLRKRVAQINKLEPAFEKLTDEELQAKTAEFKQRLADGASLDSLLHEAFATVREASRRVMGMRHFDVQLIGGMVLTNRNIAEMRTGEGKTLTATLPCYLNALTGKGVHVVTVNDYLARRDAETNRPLFEFLGLSVAVNVPGLPNEVKREAYKADITYSTNSELGFDYLRDNLAHAKEDRFQRELHYALVDEVDSILIDEARTPLIISGPAEDATQIYQAIDTIIPHLVQQDKEDTEEYTGEGDFTLDLKNKQAHLTERGMVKVEGILTEMGLMQEGETLYHPARIALLHHVYAALRAHKLFELNVDYIVKDGEVVIIDEHTGRTMAGRRWSDGLHQAIEAKEKVNIQGENQTVASITYQNYFRLYEKLAGMTGTADTEAFEFQQIYGLDTIVIPTNKPVIRDDRTDLMFKSEPEKFAAIIKDIQECMARQQPVLVGTASVEKSELLSAELTKAGIAHNVLNAKFHAQEAEIVAEAGAPGAVTIATNMAGRGTDIVLGGNWKAEIAKLENPTEEQIEAIKAAWKERYDIVMKAGGLHIIGTERHESRRIDNQLRGRSGRQGDPGSSRFYLSLDDALMRIYLNEGKLNMMRKAFSEEGEAMESKLLTKVIASAQAKVEAHNFDGRKNLLQYDDVANEQRKAIYEQRNYLLETEDISAMIETIRGDVFNRVIDQFIPPQSIEEMWDVAGLEEALKRQFGMELPIQHWLEQENDLHEETLRERIIDIATQEYHAKEEKVGSEVMRNFEKGVMLQNLDELWKEHLSAMDYLRKGIHLRGYAQKDPKQEYKKESFEMFTNMLDLLKSNVISVLSRIQVRSQEEIEEAQRQQEAMAQAESENYRTADHQAEAQQSESLTEEQLANLDIGRNDPCPCGSGKKYKHCHGSKARYA</sequence>
<dbReference type="EC" id="7.4.2.8" evidence="1"/>
<dbReference type="EMBL" id="CP000687">
    <property type="protein sequence ID" value="ABY68848.1"/>
    <property type="molecule type" value="Genomic_DNA"/>
</dbReference>
<dbReference type="RefSeq" id="WP_005600297.1">
    <property type="nucleotide sequence ID" value="NC_010278.1"/>
</dbReference>
<dbReference type="SMR" id="B0BSP6"/>
<dbReference type="KEGG" id="apj:APJL_0244"/>
<dbReference type="HOGENOM" id="CLU_005314_3_0_6"/>
<dbReference type="Proteomes" id="UP000008547">
    <property type="component" value="Chromosome"/>
</dbReference>
<dbReference type="GO" id="GO:0031522">
    <property type="term" value="C:cell envelope Sec protein transport complex"/>
    <property type="evidence" value="ECO:0007669"/>
    <property type="project" value="TreeGrafter"/>
</dbReference>
<dbReference type="GO" id="GO:0005829">
    <property type="term" value="C:cytosol"/>
    <property type="evidence" value="ECO:0007669"/>
    <property type="project" value="TreeGrafter"/>
</dbReference>
<dbReference type="GO" id="GO:0005886">
    <property type="term" value="C:plasma membrane"/>
    <property type="evidence" value="ECO:0007669"/>
    <property type="project" value="UniProtKB-SubCell"/>
</dbReference>
<dbReference type="GO" id="GO:0005524">
    <property type="term" value="F:ATP binding"/>
    <property type="evidence" value="ECO:0007669"/>
    <property type="project" value="UniProtKB-UniRule"/>
</dbReference>
<dbReference type="GO" id="GO:0046872">
    <property type="term" value="F:metal ion binding"/>
    <property type="evidence" value="ECO:0007669"/>
    <property type="project" value="UniProtKB-KW"/>
</dbReference>
<dbReference type="GO" id="GO:0008564">
    <property type="term" value="F:protein-exporting ATPase activity"/>
    <property type="evidence" value="ECO:0007669"/>
    <property type="project" value="UniProtKB-EC"/>
</dbReference>
<dbReference type="GO" id="GO:0065002">
    <property type="term" value="P:intracellular protein transmembrane transport"/>
    <property type="evidence" value="ECO:0007669"/>
    <property type="project" value="UniProtKB-UniRule"/>
</dbReference>
<dbReference type="GO" id="GO:0017038">
    <property type="term" value="P:protein import"/>
    <property type="evidence" value="ECO:0007669"/>
    <property type="project" value="InterPro"/>
</dbReference>
<dbReference type="GO" id="GO:0006605">
    <property type="term" value="P:protein targeting"/>
    <property type="evidence" value="ECO:0007669"/>
    <property type="project" value="UniProtKB-UniRule"/>
</dbReference>
<dbReference type="GO" id="GO:0043952">
    <property type="term" value="P:protein transport by the Sec complex"/>
    <property type="evidence" value="ECO:0007669"/>
    <property type="project" value="TreeGrafter"/>
</dbReference>
<dbReference type="CDD" id="cd17928">
    <property type="entry name" value="DEXDc_SecA"/>
    <property type="match status" value="1"/>
</dbReference>
<dbReference type="CDD" id="cd18803">
    <property type="entry name" value="SF2_C_secA"/>
    <property type="match status" value="1"/>
</dbReference>
<dbReference type="FunFam" id="3.40.50.300:FF:000113">
    <property type="entry name" value="Preprotein translocase subunit SecA"/>
    <property type="match status" value="1"/>
</dbReference>
<dbReference type="FunFam" id="3.90.1440.10:FF:000001">
    <property type="entry name" value="Preprotein translocase subunit SecA"/>
    <property type="match status" value="1"/>
</dbReference>
<dbReference type="FunFam" id="1.10.3060.10:FF:000003">
    <property type="entry name" value="Protein translocase subunit SecA"/>
    <property type="match status" value="1"/>
</dbReference>
<dbReference type="Gene3D" id="1.10.3060.10">
    <property type="entry name" value="Helical scaffold and wing domains of SecA"/>
    <property type="match status" value="1"/>
</dbReference>
<dbReference type="Gene3D" id="3.40.50.300">
    <property type="entry name" value="P-loop containing nucleotide triphosphate hydrolases"/>
    <property type="match status" value="2"/>
</dbReference>
<dbReference type="Gene3D" id="3.90.1440.10">
    <property type="entry name" value="SecA, preprotein cross-linking domain"/>
    <property type="match status" value="1"/>
</dbReference>
<dbReference type="HAMAP" id="MF_01382">
    <property type="entry name" value="SecA"/>
    <property type="match status" value="1"/>
</dbReference>
<dbReference type="InterPro" id="IPR014001">
    <property type="entry name" value="Helicase_ATP-bd"/>
</dbReference>
<dbReference type="InterPro" id="IPR001650">
    <property type="entry name" value="Helicase_C-like"/>
</dbReference>
<dbReference type="InterPro" id="IPR027417">
    <property type="entry name" value="P-loop_NTPase"/>
</dbReference>
<dbReference type="InterPro" id="IPR004027">
    <property type="entry name" value="SEC_C_motif"/>
</dbReference>
<dbReference type="InterPro" id="IPR000185">
    <property type="entry name" value="SecA"/>
</dbReference>
<dbReference type="InterPro" id="IPR020937">
    <property type="entry name" value="SecA_CS"/>
</dbReference>
<dbReference type="InterPro" id="IPR011115">
    <property type="entry name" value="SecA_DEAD"/>
</dbReference>
<dbReference type="InterPro" id="IPR014018">
    <property type="entry name" value="SecA_motor_DEAD"/>
</dbReference>
<dbReference type="InterPro" id="IPR011130">
    <property type="entry name" value="SecA_preprotein_X-link_dom"/>
</dbReference>
<dbReference type="InterPro" id="IPR044722">
    <property type="entry name" value="SecA_SF2_C"/>
</dbReference>
<dbReference type="InterPro" id="IPR011116">
    <property type="entry name" value="SecA_Wing/Scaffold"/>
</dbReference>
<dbReference type="InterPro" id="IPR036266">
    <property type="entry name" value="SecA_Wing/Scaffold_sf"/>
</dbReference>
<dbReference type="InterPro" id="IPR036670">
    <property type="entry name" value="SecA_X-link_sf"/>
</dbReference>
<dbReference type="NCBIfam" id="NF009538">
    <property type="entry name" value="PRK12904.1"/>
    <property type="match status" value="1"/>
</dbReference>
<dbReference type="NCBIfam" id="TIGR00963">
    <property type="entry name" value="secA"/>
    <property type="match status" value="1"/>
</dbReference>
<dbReference type="PANTHER" id="PTHR30612:SF0">
    <property type="entry name" value="CHLOROPLAST PROTEIN-TRANSPORTING ATPASE"/>
    <property type="match status" value="1"/>
</dbReference>
<dbReference type="PANTHER" id="PTHR30612">
    <property type="entry name" value="SECA INNER MEMBRANE COMPONENT OF SEC PROTEIN SECRETION SYSTEM"/>
    <property type="match status" value="1"/>
</dbReference>
<dbReference type="Pfam" id="PF21090">
    <property type="entry name" value="P-loop_SecA"/>
    <property type="match status" value="1"/>
</dbReference>
<dbReference type="Pfam" id="PF02810">
    <property type="entry name" value="SEC-C"/>
    <property type="match status" value="1"/>
</dbReference>
<dbReference type="Pfam" id="PF07517">
    <property type="entry name" value="SecA_DEAD"/>
    <property type="match status" value="1"/>
</dbReference>
<dbReference type="Pfam" id="PF01043">
    <property type="entry name" value="SecA_PP_bind"/>
    <property type="match status" value="1"/>
</dbReference>
<dbReference type="Pfam" id="PF07516">
    <property type="entry name" value="SecA_SW"/>
    <property type="match status" value="1"/>
</dbReference>
<dbReference type="PRINTS" id="PR00906">
    <property type="entry name" value="SECA"/>
</dbReference>
<dbReference type="SMART" id="SM00957">
    <property type="entry name" value="SecA_DEAD"/>
    <property type="match status" value="1"/>
</dbReference>
<dbReference type="SMART" id="SM00958">
    <property type="entry name" value="SecA_PP_bind"/>
    <property type="match status" value="1"/>
</dbReference>
<dbReference type="SUPFAM" id="SSF81886">
    <property type="entry name" value="Helical scaffold and wing domains of SecA"/>
    <property type="match status" value="1"/>
</dbReference>
<dbReference type="SUPFAM" id="SSF52540">
    <property type="entry name" value="P-loop containing nucleoside triphosphate hydrolases"/>
    <property type="match status" value="2"/>
</dbReference>
<dbReference type="SUPFAM" id="SSF81767">
    <property type="entry name" value="Pre-protein crosslinking domain of SecA"/>
    <property type="match status" value="1"/>
</dbReference>
<dbReference type="PROSITE" id="PS01312">
    <property type="entry name" value="SECA"/>
    <property type="match status" value="1"/>
</dbReference>
<dbReference type="PROSITE" id="PS51196">
    <property type="entry name" value="SECA_MOTOR_DEAD"/>
    <property type="match status" value="1"/>
</dbReference>
<gene>
    <name evidence="1" type="primary">secA</name>
    <name type="ordered locus">APJL_0244</name>
</gene>
<comment type="function">
    <text evidence="1">Part of the Sec protein translocase complex. Interacts with the SecYEG preprotein conducting channel. Has a central role in coupling the hydrolysis of ATP to the transfer of proteins into and across the cell membrane, serving both as a receptor for the preprotein-SecB complex and as an ATP-driven molecular motor driving the stepwise translocation of polypeptide chains across the membrane.</text>
</comment>
<comment type="catalytic activity">
    <reaction evidence="1">
        <text>ATP + H2O + cellular proteinSide 1 = ADP + phosphate + cellular proteinSide 2.</text>
        <dbReference type="EC" id="7.4.2.8"/>
    </reaction>
</comment>
<comment type="cofactor">
    <cofactor evidence="1">
        <name>Zn(2+)</name>
        <dbReference type="ChEBI" id="CHEBI:29105"/>
    </cofactor>
    <text evidence="1">May bind 1 zinc ion per subunit.</text>
</comment>
<comment type="subunit">
    <text evidence="1">Monomer and homodimer. Part of the essential Sec protein translocation apparatus which comprises SecA, SecYEG and auxiliary proteins SecDF-YajC and YidC.</text>
</comment>
<comment type="subcellular location">
    <subcellularLocation>
        <location evidence="1">Cell inner membrane</location>
        <topology evidence="1">Peripheral membrane protein</topology>
        <orientation evidence="1">Cytoplasmic side</orientation>
    </subcellularLocation>
    <subcellularLocation>
        <location evidence="1">Cytoplasm</location>
    </subcellularLocation>
    <text evidence="1">Distribution is 50-50.</text>
</comment>
<comment type="similarity">
    <text evidence="1">Belongs to the SecA family.</text>
</comment>
<reference key="1">
    <citation type="journal article" date="2008" name="PLoS ONE">
        <title>Genome biology of Actinobacillus pleuropneumoniae JL03, an isolate of serotype 3 prevalent in China.</title>
        <authorList>
            <person name="Xu Z."/>
            <person name="Zhou Y."/>
            <person name="Li L."/>
            <person name="Zhou R."/>
            <person name="Xiao S."/>
            <person name="Wan Y."/>
            <person name="Zhang S."/>
            <person name="Wang K."/>
            <person name="Li W."/>
            <person name="Li L."/>
            <person name="Jin H."/>
            <person name="Kang M."/>
            <person name="Dalai B."/>
            <person name="Li T."/>
            <person name="Liu L."/>
            <person name="Cheng Y."/>
            <person name="Zhang L."/>
            <person name="Xu T."/>
            <person name="Zheng H."/>
            <person name="Pu S."/>
            <person name="Wang B."/>
            <person name="Gu W."/>
            <person name="Zhang X.L."/>
            <person name="Zhu G.-F."/>
            <person name="Wang S."/>
            <person name="Zhao G.-P."/>
            <person name="Chen H."/>
        </authorList>
    </citation>
    <scope>NUCLEOTIDE SEQUENCE [LARGE SCALE GENOMIC DNA]</scope>
    <source>
        <strain>JL03</strain>
    </source>
</reference>
<name>SECA_ACTPJ</name>
<protein>
    <recommendedName>
        <fullName evidence="1">Protein translocase subunit SecA</fullName>
        <ecNumber evidence="1">7.4.2.8</ecNumber>
    </recommendedName>
</protein>
<feature type="chain" id="PRO_1000144969" description="Protein translocase subunit SecA">
    <location>
        <begin position="1"/>
        <end position="905"/>
    </location>
</feature>
<feature type="region of interest" description="Disordered" evidence="2">
    <location>
        <begin position="840"/>
        <end position="905"/>
    </location>
</feature>
<feature type="compositionally biased region" description="Low complexity" evidence="2">
    <location>
        <begin position="843"/>
        <end position="852"/>
    </location>
</feature>
<feature type="compositionally biased region" description="Basic and acidic residues" evidence="2">
    <location>
        <begin position="853"/>
        <end position="862"/>
    </location>
</feature>
<feature type="compositionally biased region" description="Polar residues" evidence="2">
    <location>
        <begin position="863"/>
        <end position="874"/>
    </location>
</feature>
<feature type="compositionally biased region" description="Basic residues" evidence="2">
    <location>
        <begin position="892"/>
        <end position="905"/>
    </location>
</feature>
<feature type="binding site" evidence="1">
    <location>
        <position position="87"/>
    </location>
    <ligand>
        <name>ATP</name>
        <dbReference type="ChEBI" id="CHEBI:30616"/>
    </ligand>
</feature>
<feature type="binding site" evidence="1">
    <location>
        <begin position="105"/>
        <end position="109"/>
    </location>
    <ligand>
        <name>ATP</name>
        <dbReference type="ChEBI" id="CHEBI:30616"/>
    </ligand>
</feature>
<feature type="binding site" evidence="1">
    <location>
        <position position="512"/>
    </location>
    <ligand>
        <name>ATP</name>
        <dbReference type="ChEBI" id="CHEBI:30616"/>
    </ligand>
</feature>
<feature type="binding site" evidence="1">
    <location>
        <position position="886"/>
    </location>
    <ligand>
        <name>Zn(2+)</name>
        <dbReference type="ChEBI" id="CHEBI:29105"/>
    </ligand>
</feature>
<feature type="binding site" evidence="1">
    <location>
        <position position="888"/>
    </location>
    <ligand>
        <name>Zn(2+)</name>
        <dbReference type="ChEBI" id="CHEBI:29105"/>
    </ligand>
</feature>
<feature type="binding site" evidence="1">
    <location>
        <position position="897"/>
    </location>
    <ligand>
        <name>Zn(2+)</name>
        <dbReference type="ChEBI" id="CHEBI:29105"/>
    </ligand>
</feature>
<feature type="binding site" evidence="1">
    <location>
        <position position="898"/>
    </location>
    <ligand>
        <name>Zn(2+)</name>
        <dbReference type="ChEBI" id="CHEBI:29105"/>
    </ligand>
</feature>
<accession>B0BSP6</accession>
<evidence type="ECO:0000255" key="1">
    <source>
        <dbReference type="HAMAP-Rule" id="MF_01382"/>
    </source>
</evidence>
<evidence type="ECO:0000256" key="2">
    <source>
        <dbReference type="SAM" id="MobiDB-lite"/>
    </source>
</evidence>
<proteinExistence type="inferred from homology"/>